<dbReference type="EC" id="4.3.2.1" evidence="1"/>
<dbReference type="EMBL" id="CP000285">
    <property type="protein sequence ID" value="ABE60454.1"/>
    <property type="molecule type" value="Genomic_DNA"/>
</dbReference>
<dbReference type="RefSeq" id="WP_011508400.1">
    <property type="nucleotide sequence ID" value="NC_007963.1"/>
</dbReference>
<dbReference type="SMR" id="Q1QSV4"/>
<dbReference type="STRING" id="290398.Csal_3110"/>
<dbReference type="GeneID" id="95335806"/>
<dbReference type="KEGG" id="csa:Csal_3110"/>
<dbReference type="eggNOG" id="COG0165">
    <property type="taxonomic scope" value="Bacteria"/>
</dbReference>
<dbReference type="HOGENOM" id="CLU_027272_2_3_6"/>
<dbReference type="OrthoDB" id="9769623at2"/>
<dbReference type="UniPathway" id="UPA00068">
    <property type="reaction ID" value="UER00114"/>
</dbReference>
<dbReference type="Proteomes" id="UP000000239">
    <property type="component" value="Chromosome"/>
</dbReference>
<dbReference type="GO" id="GO:0005829">
    <property type="term" value="C:cytosol"/>
    <property type="evidence" value="ECO:0007669"/>
    <property type="project" value="TreeGrafter"/>
</dbReference>
<dbReference type="GO" id="GO:0004056">
    <property type="term" value="F:argininosuccinate lyase activity"/>
    <property type="evidence" value="ECO:0007669"/>
    <property type="project" value="UniProtKB-UniRule"/>
</dbReference>
<dbReference type="GO" id="GO:0042450">
    <property type="term" value="P:arginine biosynthetic process via ornithine"/>
    <property type="evidence" value="ECO:0007669"/>
    <property type="project" value="InterPro"/>
</dbReference>
<dbReference type="GO" id="GO:0006526">
    <property type="term" value="P:L-arginine biosynthetic process"/>
    <property type="evidence" value="ECO:0007669"/>
    <property type="project" value="UniProtKB-UniRule"/>
</dbReference>
<dbReference type="CDD" id="cd01359">
    <property type="entry name" value="Argininosuccinate_lyase"/>
    <property type="match status" value="1"/>
</dbReference>
<dbReference type="FunFam" id="1.10.275.10:FF:000002">
    <property type="entry name" value="Argininosuccinate lyase"/>
    <property type="match status" value="1"/>
</dbReference>
<dbReference type="FunFam" id="1.10.40.30:FF:000001">
    <property type="entry name" value="Argininosuccinate lyase"/>
    <property type="match status" value="1"/>
</dbReference>
<dbReference type="FunFam" id="1.20.200.10:FF:000015">
    <property type="entry name" value="argininosuccinate lyase isoform X2"/>
    <property type="match status" value="1"/>
</dbReference>
<dbReference type="Gene3D" id="1.10.40.30">
    <property type="entry name" value="Fumarase/aspartase (C-terminal domain)"/>
    <property type="match status" value="1"/>
</dbReference>
<dbReference type="Gene3D" id="1.20.200.10">
    <property type="entry name" value="Fumarase/aspartase (Central domain)"/>
    <property type="match status" value="1"/>
</dbReference>
<dbReference type="Gene3D" id="1.10.275.10">
    <property type="entry name" value="Fumarase/aspartase (N-terminal domain)"/>
    <property type="match status" value="1"/>
</dbReference>
<dbReference type="HAMAP" id="MF_00006">
    <property type="entry name" value="Arg_succ_lyase"/>
    <property type="match status" value="1"/>
</dbReference>
<dbReference type="InterPro" id="IPR029419">
    <property type="entry name" value="Arg_succ_lyase_C"/>
</dbReference>
<dbReference type="InterPro" id="IPR009049">
    <property type="entry name" value="Argininosuccinate_lyase"/>
</dbReference>
<dbReference type="InterPro" id="IPR024083">
    <property type="entry name" value="Fumarase/histidase_N"/>
</dbReference>
<dbReference type="InterPro" id="IPR020557">
    <property type="entry name" value="Fumarate_lyase_CS"/>
</dbReference>
<dbReference type="InterPro" id="IPR000362">
    <property type="entry name" value="Fumarate_lyase_fam"/>
</dbReference>
<dbReference type="InterPro" id="IPR022761">
    <property type="entry name" value="Fumarate_lyase_N"/>
</dbReference>
<dbReference type="InterPro" id="IPR008948">
    <property type="entry name" value="L-Aspartase-like"/>
</dbReference>
<dbReference type="NCBIfam" id="TIGR00838">
    <property type="entry name" value="argH"/>
    <property type="match status" value="1"/>
</dbReference>
<dbReference type="PANTHER" id="PTHR43814">
    <property type="entry name" value="ARGININOSUCCINATE LYASE"/>
    <property type="match status" value="1"/>
</dbReference>
<dbReference type="PANTHER" id="PTHR43814:SF1">
    <property type="entry name" value="ARGININOSUCCINATE LYASE"/>
    <property type="match status" value="1"/>
</dbReference>
<dbReference type="Pfam" id="PF14698">
    <property type="entry name" value="ASL_C2"/>
    <property type="match status" value="1"/>
</dbReference>
<dbReference type="Pfam" id="PF00206">
    <property type="entry name" value="Lyase_1"/>
    <property type="match status" value="1"/>
</dbReference>
<dbReference type="PRINTS" id="PR00145">
    <property type="entry name" value="ARGSUCLYASE"/>
</dbReference>
<dbReference type="PRINTS" id="PR00149">
    <property type="entry name" value="FUMRATELYASE"/>
</dbReference>
<dbReference type="SUPFAM" id="SSF48557">
    <property type="entry name" value="L-aspartase-like"/>
    <property type="match status" value="1"/>
</dbReference>
<dbReference type="PROSITE" id="PS00163">
    <property type="entry name" value="FUMARATE_LYASES"/>
    <property type="match status" value="1"/>
</dbReference>
<feature type="chain" id="PRO_0000321436" description="Argininosuccinate lyase">
    <location>
        <begin position="1"/>
        <end position="467"/>
    </location>
</feature>
<sequence>MSNTTNQSWGGRFSEPTDAFVARFTASVDFDRRLYHHDIRGSIAHATMLERVGVLTADERDAILQGLGEIEQEIDAGTFEWSVDLEDVHMNLEARLTEKIGITGKKLHTGRSRNDQIATDIRLYLRDAIDVVDAELARLREGLIELAAREADTIMPGFTHLQTAQPVTFGHHLLAWQEMLARDHERLRDCRKRVNVMPLGAAALAGTTYPIDRHITAELLGFERPAENSLDAVSDRDFAIEFGAFASVLLMHMSRMSEELVLWTSAQFDFIDLPDRFCTGSSIMPQKKNPDVPELVRGKTGRVYGHLMGLLTLMKSQPLAYNKDNQEDKEPLFDTLDTVQGCLKAFADMVPAIEAKADNMFEAARKGFSTATDLADYLVRAGVAFRDAHEIVGQAVALGLREKKDLSEMTLDELRQFSDAIGEDVFEVLTLEGSVAARNHIGGTAPDQVRAAAQRARDALATLRQEA</sequence>
<evidence type="ECO:0000255" key="1">
    <source>
        <dbReference type="HAMAP-Rule" id="MF_00006"/>
    </source>
</evidence>
<accession>Q1QSV4</accession>
<reference key="1">
    <citation type="journal article" date="2011" name="Stand. Genomic Sci.">
        <title>Complete genome sequence of the halophilic and highly halotolerant Chromohalobacter salexigens type strain (1H11(T)).</title>
        <authorList>
            <person name="Copeland A."/>
            <person name="O'Connor K."/>
            <person name="Lucas S."/>
            <person name="Lapidus A."/>
            <person name="Berry K.W."/>
            <person name="Detter J.C."/>
            <person name="Del Rio T.G."/>
            <person name="Hammon N."/>
            <person name="Dalin E."/>
            <person name="Tice H."/>
            <person name="Pitluck S."/>
            <person name="Bruce D."/>
            <person name="Goodwin L."/>
            <person name="Han C."/>
            <person name="Tapia R."/>
            <person name="Saunders E."/>
            <person name="Schmutz J."/>
            <person name="Brettin T."/>
            <person name="Larimer F."/>
            <person name="Land M."/>
            <person name="Hauser L."/>
            <person name="Vargas C."/>
            <person name="Nieto J.J."/>
            <person name="Kyrpides N.C."/>
            <person name="Ivanova N."/>
            <person name="Goker M."/>
            <person name="Klenk H.P."/>
            <person name="Csonka L.N."/>
            <person name="Woyke T."/>
        </authorList>
    </citation>
    <scope>NUCLEOTIDE SEQUENCE [LARGE SCALE GENOMIC DNA]</scope>
    <source>
        <strain>ATCC BAA-138 / DSM 3043 / CIP 106854 / NCIMB 13768 / 1H11</strain>
    </source>
</reference>
<keyword id="KW-0028">Amino-acid biosynthesis</keyword>
<keyword id="KW-0055">Arginine biosynthesis</keyword>
<keyword id="KW-0963">Cytoplasm</keyword>
<keyword id="KW-0456">Lyase</keyword>
<keyword id="KW-1185">Reference proteome</keyword>
<proteinExistence type="inferred from homology"/>
<organism>
    <name type="scientific">Chromohalobacter salexigens (strain ATCC BAA-138 / DSM 3043 / CIP 106854 / NCIMB 13768 / 1H11)</name>
    <dbReference type="NCBI Taxonomy" id="290398"/>
    <lineage>
        <taxon>Bacteria</taxon>
        <taxon>Pseudomonadati</taxon>
        <taxon>Pseudomonadota</taxon>
        <taxon>Gammaproteobacteria</taxon>
        <taxon>Oceanospirillales</taxon>
        <taxon>Halomonadaceae</taxon>
        <taxon>Chromohalobacter</taxon>
    </lineage>
</organism>
<protein>
    <recommendedName>
        <fullName evidence="1">Argininosuccinate lyase</fullName>
        <shortName evidence="1">ASAL</shortName>
        <ecNumber evidence="1">4.3.2.1</ecNumber>
    </recommendedName>
    <alternativeName>
        <fullName evidence="1">Arginosuccinase</fullName>
    </alternativeName>
</protein>
<comment type="catalytic activity">
    <reaction evidence="1">
        <text>2-(N(omega)-L-arginino)succinate = fumarate + L-arginine</text>
        <dbReference type="Rhea" id="RHEA:24020"/>
        <dbReference type="ChEBI" id="CHEBI:29806"/>
        <dbReference type="ChEBI" id="CHEBI:32682"/>
        <dbReference type="ChEBI" id="CHEBI:57472"/>
        <dbReference type="EC" id="4.3.2.1"/>
    </reaction>
</comment>
<comment type="pathway">
    <text evidence="1">Amino-acid biosynthesis; L-arginine biosynthesis; L-arginine from L-ornithine and carbamoyl phosphate: step 3/3.</text>
</comment>
<comment type="subcellular location">
    <subcellularLocation>
        <location evidence="1">Cytoplasm</location>
    </subcellularLocation>
</comment>
<comment type="similarity">
    <text evidence="1">Belongs to the lyase 1 family. Argininosuccinate lyase subfamily.</text>
</comment>
<gene>
    <name evidence="1" type="primary">argH</name>
    <name type="ordered locus">Csal_3110</name>
</gene>
<name>ARLY_CHRSD</name>